<feature type="chain" id="PRO_0000212472" description="Ubiquitin-like protein ATG12">
    <location>
        <begin position="1"/>
        <end position="141"/>
    </location>
</feature>
<feature type="region of interest" description="Disordered" evidence="3">
    <location>
        <begin position="1"/>
        <end position="53"/>
    </location>
</feature>
<feature type="compositionally biased region" description="Low complexity" evidence="3">
    <location>
        <begin position="23"/>
        <end position="40"/>
    </location>
</feature>
<feature type="cross-link" description="Glycyl lysine isopeptide (Gly-Lys) (interchain with K-? in acceptor protein)">
    <location>
        <position position="141"/>
    </location>
</feature>
<feature type="sequence conflict" description="In Ref. 2; BAB25839." evidence="16" ref="2">
    <original>GTEEP</original>
    <variation>ERGT</variation>
    <location>
        <begin position="44"/>
        <end position="48"/>
    </location>
</feature>
<comment type="function">
    <text evidence="4 7 12 15">Ubiquitin-like protein involved in autophagy vesicles formation. Conjugation with ATG5 through a ubiquitin-like conjugating system involving also ATG7 as an E1-like activating enzyme and ATG10 as an E2-like conjugating enzyme, is essential for its function. The ATG12-ATG5 conjugate acts as an E3-like enzyme which is required for lipidation of ATG8 family proteins and their association to the vesicle membranes. As part of the ATG8 conjugation system with ATG5 and ATG16L1, required for recruitment of LRRK2 to stressed lysosomes and induction of LRRK2 kinase activity in response to lysosomal stress (PubMed:38227290).</text>
</comment>
<comment type="function">
    <text evidence="8">(Microbial infection) May act as a proviral factor. In association with ATG5, negatively regulates the innate antiviral immune response by impairing the type I IFN production pathway upon vesicular stomatitis virus (VSV) infection.</text>
</comment>
<comment type="subunit">
    <text evidence="2 4 5 6 7 10 11 13 14">Forms a conjugate with ATG5 (PubMed:11266458, PubMed:12482611, PubMed:12665549, PubMed:12890687, PubMed:18768753, PubMed:19417210). Part of the minor complex composed of 4 sets of ATG12-ATG5 and ATG16L1 (400 kDa); this complex interacts with ATG3 leading to disruption of ATG7 interaction and promotion of ATG8-like proteins lipidation (PubMed:12665549). Forms an 800-kDa complex composed of ATG12-ATG5 and ATG16L2 (PubMed:22082872). Interacts with DHX58/RIG-1, IFIH1/MDA5 and MAVS/IPS-1 in monomeric form as well as in ATG12-ATG5 conjugate. The interaction with MAVS is further enhanced upon vesicular stomatitis virus (VSV) infection. Interacts with ATG3; this interaction is essential for phosphatidylethanolamine (PE)-conjugated ATG8-like proteins formation (By similarity). Interacts with ATG7 (By similarity). Interacts with ATG10 (PubMed:12482611). The ATG12-ATG5 conjugate interacts with RAB33A; this interaction is bridged by ATG16L1 and promotes ATG12-ATG5-ATG16L1 complex recruitment to phagophores (By similarity). Interacts with TECPR1 (By similarity). Interacts with SH3BGRL (By similarity). The ATG12-ATG5 conjugate interacts with PDCD6IP (via the BRO1 domain); this interaction is bridged by ATG12 and promotes multiple PDCD6IP-mediated functions such as endolysosomal trafficking, macroautophagy and exosome biogenesis (PubMed:25686249).</text>
</comment>
<comment type="interaction">
    <interactant intactId="EBI-2911788">
        <id>Q9CQY1</id>
    </interactant>
    <interactant intactId="EBI-2911810">
        <id>Q9CPX6</id>
        <label>Atg3</label>
    </interactant>
    <organismsDiffer>false</organismsDiffer>
    <experiments>5</experiments>
</comment>
<comment type="interaction">
    <interactant intactId="EBI-2911788">
        <id>Q9CQY1</id>
    </interactant>
    <interactant intactId="EBI-2911848">
        <id>Q99J83</id>
        <label>Atg5</label>
    </interactant>
    <organismsDiffer>false</organismsDiffer>
    <experiments>4</experiments>
</comment>
<comment type="interaction">
    <interactant intactId="EBI-2911788">
        <id>Q9CQY1</id>
    </interactant>
    <interactant intactId="EBI-15788421">
        <id>Q9WU78-1</id>
        <label>Pdcd6ip</label>
    </interactant>
    <organismsDiffer>false</organismsDiffer>
    <experiments>3</experiments>
</comment>
<comment type="subcellular location">
    <subcellularLocation>
        <location evidence="1">Cytoplasm</location>
    </subcellularLocation>
    <subcellularLocation>
        <location evidence="2">Preautophagosomal structure membrane</location>
        <topology evidence="2">Peripheral membrane protein</topology>
    </subcellularLocation>
    <text evidence="2">TECPR1 recruits the ATG12-ATG5 conjugate to the autolysosomal membrane.</text>
</comment>
<comment type="tissue specificity">
    <text>Ubiquitous.</text>
</comment>
<comment type="domain">
    <text evidence="9">Shares weak sequence similarity with ubiquitin family, but contains an 'ubiquitin superfold' and the C-terminal Gly is required for isopeptide linkage.</text>
</comment>
<comment type="PTM">
    <text evidence="1">Acetylated by EP300.</text>
</comment>
<comment type="similarity">
    <text evidence="16">Belongs to the ATG12 family.</text>
</comment>
<protein>
    <recommendedName>
        <fullName evidence="16">Ubiquitin-like protein ATG12</fullName>
    </recommendedName>
    <alternativeName>
        <fullName>Autophagy-related protein 12</fullName>
        <shortName>APG12-like</shortName>
    </alternativeName>
</protein>
<proteinExistence type="evidence at protein level"/>
<dbReference type="EMBL" id="AB066216">
    <property type="protein sequence ID" value="BAB62092.1"/>
    <property type="molecule type" value="mRNA"/>
</dbReference>
<dbReference type="EMBL" id="AK008698">
    <property type="protein sequence ID" value="BAB25839.1"/>
    <property type="molecule type" value="mRNA"/>
</dbReference>
<dbReference type="EMBL" id="AK016474">
    <property type="protein sequence ID" value="BAB30256.1"/>
    <property type="molecule type" value="mRNA"/>
</dbReference>
<dbReference type="EMBL" id="AK005405">
    <property type="protein sequence ID" value="BAB24005.1"/>
    <property type="molecule type" value="mRNA"/>
</dbReference>
<dbReference type="EMBL" id="AK167027">
    <property type="protein sequence ID" value="BAE39200.1"/>
    <property type="molecule type" value="mRNA"/>
</dbReference>
<dbReference type="EMBL" id="BC070470">
    <property type="protein sequence ID" value="AAH70470.1"/>
    <property type="molecule type" value="mRNA"/>
</dbReference>
<dbReference type="CCDS" id="CCDS37811.1"/>
<dbReference type="RefSeq" id="NP_080493.2">
    <property type="nucleotide sequence ID" value="NM_026217.3"/>
</dbReference>
<dbReference type="SMR" id="Q9CQY1"/>
<dbReference type="BioGRID" id="212249">
    <property type="interactions" value="240"/>
</dbReference>
<dbReference type="ComplexPortal" id="CPX-328">
    <property type="entry name" value="Atg12-Atg5-Atg16l1 complex"/>
</dbReference>
<dbReference type="ComplexPortal" id="CPX-355">
    <property type="entry name" value="Atg12-Atg5-Atg16l2 complex"/>
</dbReference>
<dbReference type="ComplexPortal" id="CPX-357">
    <property type="entry name" value="Atg5-Atg12 complex"/>
</dbReference>
<dbReference type="ComplexPortal" id="CPX-360">
    <property type="entry name" value="ATG5-ATG12-TECPR1 complex"/>
</dbReference>
<dbReference type="CORUM" id="Q9CQY1"/>
<dbReference type="DIP" id="DIP-57729N"/>
<dbReference type="FunCoup" id="Q9CQY1">
    <property type="interactions" value="3456"/>
</dbReference>
<dbReference type="IntAct" id="Q9CQY1">
    <property type="interactions" value="10"/>
</dbReference>
<dbReference type="MINT" id="Q9CQY1"/>
<dbReference type="STRING" id="10090.ENSMUSP00000038489"/>
<dbReference type="iPTMnet" id="Q9CQY1"/>
<dbReference type="PhosphoSitePlus" id="Q9CQY1"/>
<dbReference type="jPOST" id="Q9CQY1"/>
<dbReference type="PaxDb" id="10090-ENSMUSP00000038489"/>
<dbReference type="PeptideAtlas" id="Q9CQY1"/>
<dbReference type="ProteomicsDB" id="265146"/>
<dbReference type="Antibodypedia" id="4593">
    <property type="antibodies" value="773 antibodies from 41 providers"/>
</dbReference>
<dbReference type="Ensembl" id="ENSMUST00000035648.6">
    <property type="protein sequence ID" value="ENSMUSP00000038489.5"/>
    <property type="gene ID" value="ENSMUSG00000032905.6"/>
</dbReference>
<dbReference type="GeneID" id="67526"/>
<dbReference type="KEGG" id="mmu:67526"/>
<dbReference type="UCSC" id="uc008evu.1">
    <property type="organism name" value="mouse"/>
</dbReference>
<dbReference type="AGR" id="MGI:1914776"/>
<dbReference type="CTD" id="9140"/>
<dbReference type="MGI" id="MGI:1914776">
    <property type="gene designation" value="Atg12"/>
</dbReference>
<dbReference type="VEuPathDB" id="HostDB:ENSMUSG00000032905"/>
<dbReference type="eggNOG" id="KOG3439">
    <property type="taxonomic scope" value="Eukaryota"/>
</dbReference>
<dbReference type="GeneTree" id="ENSGT00390000016654"/>
<dbReference type="HOGENOM" id="CLU_106795_3_0_1"/>
<dbReference type="InParanoid" id="Q9CQY1"/>
<dbReference type="OMA" id="YAKTHAW"/>
<dbReference type="OrthoDB" id="10003551at2759"/>
<dbReference type="PhylomeDB" id="Q9CQY1"/>
<dbReference type="TreeFam" id="TF325131"/>
<dbReference type="Reactome" id="R-MMU-1632852">
    <property type="pathway name" value="Macroautophagy"/>
</dbReference>
<dbReference type="Reactome" id="R-MMU-5205685">
    <property type="pathway name" value="PINK1-PRKN Mediated Mitophagy"/>
</dbReference>
<dbReference type="Reactome" id="R-MMU-8934903">
    <property type="pathway name" value="Receptor Mediated Mitophagy"/>
</dbReference>
<dbReference type="BioGRID-ORCS" id="67526">
    <property type="hits" value="26 hits in 81 CRISPR screens"/>
</dbReference>
<dbReference type="ChiTaRS" id="Atg12">
    <property type="organism name" value="mouse"/>
</dbReference>
<dbReference type="PRO" id="PR:Q9CQY1"/>
<dbReference type="Proteomes" id="UP000000589">
    <property type="component" value="Chromosome 18"/>
</dbReference>
<dbReference type="RNAct" id="Q9CQY1">
    <property type="molecule type" value="protein"/>
</dbReference>
<dbReference type="Bgee" id="ENSMUSG00000032905">
    <property type="expression patterns" value="Expressed in blood and 266 other cell types or tissues"/>
</dbReference>
<dbReference type="GO" id="GO:0034274">
    <property type="term" value="C:Atg12-Atg5-Atg16 complex"/>
    <property type="evidence" value="ECO:0000314"/>
    <property type="project" value="ComplexPortal"/>
</dbReference>
<dbReference type="GO" id="GO:0005776">
    <property type="term" value="C:autophagosome"/>
    <property type="evidence" value="ECO:0000266"/>
    <property type="project" value="MGI"/>
</dbReference>
<dbReference type="GO" id="GO:0005829">
    <property type="term" value="C:cytosol"/>
    <property type="evidence" value="ECO:0000304"/>
    <property type="project" value="Reactome"/>
</dbReference>
<dbReference type="GO" id="GO:0016020">
    <property type="term" value="C:membrane"/>
    <property type="evidence" value="ECO:0000315"/>
    <property type="project" value="ParkinsonsUK-UCL"/>
</dbReference>
<dbReference type="GO" id="GO:0005654">
    <property type="term" value="C:nucleoplasm"/>
    <property type="evidence" value="ECO:0007669"/>
    <property type="project" value="Ensembl"/>
</dbReference>
<dbReference type="GO" id="GO:0034045">
    <property type="term" value="C:phagophore assembly site membrane"/>
    <property type="evidence" value="ECO:0000314"/>
    <property type="project" value="UniProtKB"/>
</dbReference>
<dbReference type="GO" id="GO:0032991">
    <property type="term" value="C:protein-containing complex"/>
    <property type="evidence" value="ECO:0000303"/>
    <property type="project" value="ComplexPortal"/>
</dbReference>
<dbReference type="GO" id="GO:1990234">
    <property type="term" value="C:transferase complex"/>
    <property type="evidence" value="ECO:0000314"/>
    <property type="project" value="ComplexPortal"/>
</dbReference>
<dbReference type="GO" id="GO:0000045">
    <property type="term" value="P:autophagosome assembly"/>
    <property type="evidence" value="ECO:0000315"/>
    <property type="project" value="UniProtKB"/>
</dbReference>
<dbReference type="GO" id="GO:0006914">
    <property type="term" value="P:autophagy"/>
    <property type="evidence" value="ECO:0000304"/>
    <property type="project" value="MGI"/>
</dbReference>
<dbReference type="GO" id="GO:0016236">
    <property type="term" value="P:macroautophagy"/>
    <property type="evidence" value="ECO:0000315"/>
    <property type="project" value="ComplexPortal"/>
</dbReference>
<dbReference type="GO" id="GO:0050687">
    <property type="term" value="P:negative regulation of defense response to virus"/>
    <property type="evidence" value="ECO:0000314"/>
    <property type="project" value="ComplexPortal"/>
</dbReference>
<dbReference type="GO" id="GO:0045824">
    <property type="term" value="P:negative regulation of innate immune response"/>
    <property type="evidence" value="ECO:0000314"/>
    <property type="project" value="ComplexPortal"/>
</dbReference>
<dbReference type="GO" id="GO:0032480">
    <property type="term" value="P:negative regulation of type I interferon production"/>
    <property type="evidence" value="ECO:0000314"/>
    <property type="project" value="ComplexPortal"/>
</dbReference>
<dbReference type="GO" id="GO:1904973">
    <property type="term" value="P:positive regulation of viral translation"/>
    <property type="evidence" value="ECO:0000266"/>
    <property type="project" value="ComplexPortal"/>
</dbReference>
<dbReference type="GO" id="GO:1901096">
    <property type="term" value="P:regulation of autophagosome maturation"/>
    <property type="evidence" value="ECO:0000266"/>
    <property type="project" value="ComplexPortal"/>
</dbReference>
<dbReference type="CDD" id="cd01612">
    <property type="entry name" value="Ubl_ATG12"/>
    <property type="match status" value="1"/>
</dbReference>
<dbReference type="FunFam" id="3.10.20.90:FF:000117">
    <property type="entry name" value="Ubiquitin-like protein ATG12"/>
    <property type="match status" value="1"/>
</dbReference>
<dbReference type="Gene3D" id="3.10.20.90">
    <property type="entry name" value="Phosphatidylinositol 3-kinase Catalytic Subunit, Chain A, domain 1"/>
    <property type="match status" value="1"/>
</dbReference>
<dbReference type="InterPro" id="IPR007242">
    <property type="entry name" value="Atg12"/>
</dbReference>
<dbReference type="InterPro" id="IPR029071">
    <property type="entry name" value="Ubiquitin-like_domsf"/>
</dbReference>
<dbReference type="PANTHER" id="PTHR13385">
    <property type="entry name" value="AUTOPHAGY PROTEIN 12"/>
    <property type="match status" value="1"/>
</dbReference>
<dbReference type="PANTHER" id="PTHR13385:SF0">
    <property type="entry name" value="UBIQUITIN-LIKE PROTEIN ATG12"/>
    <property type="match status" value="1"/>
</dbReference>
<dbReference type="Pfam" id="PF04110">
    <property type="entry name" value="APG12"/>
    <property type="match status" value="1"/>
</dbReference>
<dbReference type="SUPFAM" id="SSF54236">
    <property type="entry name" value="Ubiquitin-like"/>
    <property type="match status" value="1"/>
</dbReference>
<accession>Q9CQY1</accession>
<accession>Q3TKE5</accession>
<accession>Q9D7Y5</accession>
<organism>
    <name type="scientific">Mus musculus</name>
    <name type="common">Mouse</name>
    <dbReference type="NCBI Taxonomy" id="10090"/>
    <lineage>
        <taxon>Eukaryota</taxon>
        <taxon>Metazoa</taxon>
        <taxon>Chordata</taxon>
        <taxon>Craniata</taxon>
        <taxon>Vertebrata</taxon>
        <taxon>Euteleostomi</taxon>
        <taxon>Mammalia</taxon>
        <taxon>Eutheria</taxon>
        <taxon>Euarchontoglires</taxon>
        <taxon>Glires</taxon>
        <taxon>Rodentia</taxon>
        <taxon>Myomorpha</taxon>
        <taxon>Muroidea</taxon>
        <taxon>Muridae</taxon>
        <taxon>Murinae</taxon>
        <taxon>Mus</taxon>
        <taxon>Mus</taxon>
    </lineage>
</organism>
<keyword id="KW-0007">Acetylation</keyword>
<keyword id="KW-0072">Autophagy</keyword>
<keyword id="KW-0963">Cytoplasm</keyword>
<keyword id="KW-1017">Isopeptide bond</keyword>
<keyword id="KW-0472">Membrane</keyword>
<keyword id="KW-1185">Reference proteome</keyword>
<keyword id="KW-0833">Ubl conjugation pathway</keyword>
<evidence type="ECO:0000250" key="1"/>
<evidence type="ECO:0000250" key="2">
    <source>
        <dbReference type="UniProtKB" id="O94817"/>
    </source>
</evidence>
<evidence type="ECO:0000256" key="3">
    <source>
        <dbReference type="SAM" id="MobiDB-lite"/>
    </source>
</evidence>
<evidence type="ECO:0000269" key="4">
    <source>
    </source>
</evidence>
<evidence type="ECO:0000269" key="5">
    <source>
    </source>
</evidence>
<evidence type="ECO:0000269" key="6">
    <source>
    </source>
</evidence>
<evidence type="ECO:0000269" key="7">
    <source>
    </source>
</evidence>
<evidence type="ECO:0000269" key="8">
    <source>
    </source>
</evidence>
<evidence type="ECO:0000269" key="9">
    <source>
    </source>
</evidence>
<evidence type="ECO:0000269" key="10">
    <source>
    </source>
</evidence>
<evidence type="ECO:0000269" key="11">
    <source>
    </source>
</evidence>
<evidence type="ECO:0000269" key="12">
    <source>
    </source>
</evidence>
<evidence type="ECO:0000269" key="13">
    <source>
    </source>
</evidence>
<evidence type="ECO:0000269" key="14">
    <source>
    </source>
</evidence>
<evidence type="ECO:0000269" key="15">
    <source>
    </source>
</evidence>
<evidence type="ECO:0000305" key="16"/>
<evidence type="ECO:0000312" key="17">
    <source>
        <dbReference type="MGI" id="MGI:1914776"/>
    </source>
</evidence>
<name>ATG12_MOUSE</name>
<sequence length="141" mass="15207">MSEDSEVVLQLPSAPVGAGGESLPELSPETATPEPPSSAAVSPGTEEPPGDTKKKIDILLKAVGDTPIMKTKKWAVERTRTIQGLIDFIKKFLKLVASEQLFIYVNQSFAPSPDQEVGTLYECFGSDGKLVLHYCKSQAWG</sequence>
<gene>
    <name evidence="17" type="primary">Atg12</name>
    <name type="synonym">Apg12</name>
    <name type="synonym">Apg12l</name>
</gene>
<reference key="1">
    <citation type="journal article" date="2001" name="J. Cell Biol.">
        <title>Dissection of autophagosome formation using Apg5-deficient mouse embryonic stem cells.</title>
        <authorList>
            <person name="Mizushima N."/>
            <person name="Yamamoto A."/>
            <person name="Hatano M."/>
            <person name="Kobayashi Y."/>
            <person name="Kabeya Y."/>
            <person name="Suzuki K."/>
            <person name="Tokuhisa T."/>
            <person name="Ohsumi Y."/>
            <person name="Yoshimori T."/>
        </authorList>
    </citation>
    <scope>NUCLEOTIDE SEQUENCE [MRNA]</scope>
    <scope>CONJUGATION TO ATG5</scope>
    <scope>FUNCTION OF THE ATG12/ATG5 CONJUGATE</scope>
    <scope>SUBCELLULAR LOCATION</scope>
</reference>
<reference key="2">
    <citation type="journal article" date="2005" name="Science">
        <title>The transcriptional landscape of the mammalian genome.</title>
        <authorList>
            <person name="Carninci P."/>
            <person name="Kasukawa T."/>
            <person name="Katayama S."/>
            <person name="Gough J."/>
            <person name="Frith M.C."/>
            <person name="Maeda N."/>
            <person name="Oyama R."/>
            <person name="Ravasi T."/>
            <person name="Lenhard B."/>
            <person name="Wells C."/>
            <person name="Kodzius R."/>
            <person name="Shimokawa K."/>
            <person name="Bajic V.B."/>
            <person name="Brenner S.E."/>
            <person name="Batalov S."/>
            <person name="Forrest A.R."/>
            <person name="Zavolan M."/>
            <person name="Davis M.J."/>
            <person name="Wilming L.G."/>
            <person name="Aidinis V."/>
            <person name="Allen J.E."/>
            <person name="Ambesi-Impiombato A."/>
            <person name="Apweiler R."/>
            <person name="Aturaliya R.N."/>
            <person name="Bailey T.L."/>
            <person name="Bansal M."/>
            <person name="Baxter L."/>
            <person name="Beisel K.W."/>
            <person name="Bersano T."/>
            <person name="Bono H."/>
            <person name="Chalk A.M."/>
            <person name="Chiu K.P."/>
            <person name="Choudhary V."/>
            <person name="Christoffels A."/>
            <person name="Clutterbuck D.R."/>
            <person name="Crowe M.L."/>
            <person name="Dalla E."/>
            <person name="Dalrymple B.P."/>
            <person name="de Bono B."/>
            <person name="Della Gatta G."/>
            <person name="di Bernardo D."/>
            <person name="Down T."/>
            <person name="Engstrom P."/>
            <person name="Fagiolini M."/>
            <person name="Faulkner G."/>
            <person name="Fletcher C.F."/>
            <person name="Fukushima T."/>
            <person name="Furuno M."/>
            <person name="Futaki S."/>
            <person name="Gariboldi M."/>
            <person name="Georgii-Hemming P."/>
            <person name="Gingeras T.R."/>
            <person name="Gojobori T."/>
            <person name="Green R.E."/>
            <person name="Gustincich S."/>
            <person name="Harbers M."/>
            <person name="Hayashi Y."/>
            <person name="Hensch T.K."/>
            <person name="Hirokawa N."/>
            <person name="Hill D."/>
            <person name="Huminiecki L."/>
            <person name="Iacono M."/>
            <person name="Ikeo K."/>
            <person name="Iwama A."/>
            <person name="Ishikawa T."/>
            <person name="Jakt M."/>
            <person name="Kanapin A."/>
            <person name="Katoh M."/>
            <person name="Kawasawa Y."/>
            <person name="Kelso J."/>
            <person name="Kitamura H."/>
            <person name="Kitano H."/>
            <person name="Kollias G."/>
            <person name="Krishnan S.P."/>
            <person name="Kruger A."/>
            <person name="Kummerfeld S.K."/>
            <person name="Kurochkin I.V."/>
            <person name="Lareau L.F."/>
            <person name="Lazarevic D."/>
            <person name="Lipovich L."/>
            <person name="Liu J."/>
            <person name="Liuni S."/>
            <person name="McWilliam S."/>
            <person name="Madan Babu M."/>
            <person name="Madera M."/>
            <person name="Marchionni L."/>
            <person name="Matsuda H."/>
            <person name="Matsuzawa S."/>
            <person name="Miki H."/>
            <person name="Mignone F."/>
            <person name="Miyake S."/>
            <person name="Morris K."/>
            <person name="Mottagui-Tabar S."/>
            <person name="Mulder N."/>
            <person name="Nakano N."/>
            <person name="Nakauchi H."/>
            <person name="Ng P."/>
            <person name="Nilsson R."/>
            <person name="Nishiguchi S."/>
            <person name="Nishikawa S."/>
            <person name="Nori F."/>
            <person name="Ohara O."/>
            <person name="Okazaki Y."/>
            <person name="Orlando V."/>
            <person name="Pang K.C."/>
            <person name="Pavan W.J."/>
            <person name="Pavesi G."/>
            <person name="Pesole G."/>
            <person name="Petrovsky N."/>
            <person name="Piazza S."/>
            <person name="Reed J."/>
            <person name="Reid J.F."/>
            <person name="Ring B.Z."/>
            <person name="Ringwald M."/>
            <person name="Rost B."/>
            <person name="Ruan Y."/>
            <person name="Salzberg S.L."/>
            <person name="Sandelin A."/>
            <person name="Schneider C."/>
            <person name="Schoenbach C."/>
            <person name="Sekiguchi K."/>
            <person name="Semple C.A."/>
            <person name="Seno S."/>
            <person name="Sessa L."/>
            <person name="Sheng Y."/>
            <person name="Shibata Y."/>
            <person name="Shimada H."/>
            <person name="Shimada K."/>
            <person name="Silva D."/>
            <person name="Sinclair B."/>
            <person name="Sperling S."/>
            <person name="Stupka E."/>
            <person name="Sugiura K."/>
            <person name="Sultana R."/>
            <person name="Takenaka Y."/>
            <person name="Taki K."/>
            <person name="Tammoja K."/>
            <person name="Tan S.L."/>
            <person name="Tang S."/>
            <person name="Taylor M.S."/>
            <person name="Tegner J."/>
            <person name="Teichmann S.A."/>
            <person name="Ueda H.R."/>
            <person name="van Nimwegen E."/>
            <person name="Verardo R."/>
            <person name="Wei C.L."/>
            <person name="Yagi K."/>
            <person name="Yamanishi H."/>
            <person name="Zabarovsky E."/>
            <person name="Zhu S."/>
            <person name="Zimmer A."/>
            <person name="Hide W."/>
            <person name="Bult C."/>
            <person name="Grimmond S.M."/>
            <person name="Teasdale R.D."/>
            <person name="Liu E.T."/>
            <person name="Brusic V."/>
            <person name="Quackenbush J."/>
            <person name="Wahlestedt C."/>
            <person name="Mattick J.S."/>
            <person name="Hume D.A."/>
            <person name="Kai C."/>
            <person name="Sasaki D."/>
            <person name="Tomaru Y."/>
            <person name="Fukuda S."/>
            <person name="Kanamori-Katayama M."/>
            <person name="Suzuki M."/>
            <person name="Aoki J."/>
            <person name="Arakawa T."/>
            <person name="Iida J."/>
            <person name="Imamura K."/>
            <person name="Itoh M."/>
            <person name="Kato T."/>
            <person name="Kawaji H."/>
            <person name="Kawagashira N."/>
            <person name="Kawashima T."/>
            <person name="Kojima M."/>
            <person name="Kondo S."/>
            <person name="Konno H."/>
            <person name="Nakano K."/>
            <person name="Ninomiya N."/>
            <person name="Nishio T."/>
            <person name="Okada M."/>
            <person name="Plessy C."/>
            <person name="Shibata K."/>
            <person name="Shiraki T."/>
            <person name="Suzuki S."/>
            <person name="Tagami M."/>
            <person name="Waki K."/>
            <person name="Watahiki A."/>
            <person name="Okamura-Oho Y."/>
            <person name="Suzuki H."/>
            <person name="Kawai J."/>
            <person name="Hayashizaki Y."/>
        </authorList>
    </citation>
    <scope>NUCLEOTIDE SEQUENCE [LARGE SCALE MRNA]</scope>
    <source>
        <strain>C57BL/6J</strain>
        <tissue>Blastocyst</tissue>
        <tissue>Placenta</tissue>
        <tissue>Stomach</tissue>
        <tissue>Testis</tissue>
    </source>
</reference>
<reference key="3">
    <citation type="journal article" date="2004" name="Genome Res.">
        <title>The status, quality, and expansion of the NIH full-length cDNA project: the Mammalian Gene Collection (MGC).</title>
        <authorList>
            <consortium name="The MGC Project Team"/>
        </authorList>
    </citation>
    <scope>NUCLEOTIDE SEQUENCE [LARGE SCALE MRNA]</scope>
    <source>
        <strain>C57BL/6J</strain>
        <tissue>Brain</tissue>
    </source>
</reference>
<reference key="4">
    <citation type="journal article" date="2002" name="FEBS Lett.">
        <title>Mouse Apg10 as an Apg12-conjugating enzyme: analysis by the conjugation-mediated yeast two-hybrid method.</title>
        <authorList>
            <person name="Mizushima N."/>
            <person name="Yoshimori T."/>
            <person name="Ohsumi Y."/>
        </authorList>
    </citation>
    <scope>INTERACTION WITH ATG10</scope>
    <scope>CONJUGATION TO ATG5</scope>
</reference>
<reference key="5">
    <citation type="journal article" date="2003" name="J. Biol. Chem.">
        <title>The mouse APG10 homologue, an E2-like enzyme for Apg12p conjugation, facilitates MAP-LC3 modification.</title>
        <authorList>
            <person name="Nemoto T."/>
            <person name="Tanida I."/>
            <person name="Tanida-Miyake E."/>
            <person name="Minematsu-Ikeguchi N."/>
            <person name="Yokota M."/>
            <person name="Ohsumi M."/>
            <person name="Ueno T."/>
            <person name="Kominami E."/>
        </authorList>
    </citation>
    <scope>CONJUGATION TO ATG5 BY ATG10</scope>
    <scope>FUNCTION</scope>
</reference>
<reference key="6">
    <citation type="journal article" date="2003" name="J. Cell Sci.">
        <title>Mouse Apg16L, a novel WD-repeat protein, targets to the autophagic isolation membrane with the Apg12-Apg5 conjugate.</title>
        <authorList>
            <person name="Mizushima N."/>
            <person name="Kuma A."/>
            <person name="Kobayashi Y."/>
            <person name="Yamamoto A."/>
            <person name="Matsubae M."/>
            <person name="Takao T."/>
            <person name="Natsume T."/>
            <person name="Ohsumi Y."/>
            <person name="Yoshimori T."/>
        </authorList>
    </citation>
    <scope>IDENTIFICATION IN A COMPLEX WITH ATG5 AND ATG16L1</scope>
</reference>
<reference key="7">
    <citation type="journal article" date="2007" name="Proc. Natl. Acad. Sci. U.S.A.">
        <title>The Atg5-Atg12 conjugate associates with innate antiviral immune responses.</title>
        <authorList>
            <person name="Jounai N."/>
            <person name="Takeshita F."/>
            <person name="Kobiyama K."/>
            <person name="Sawano A."/>
            <person name="Miyawaki A."/>
            <person name="Xin K.Q."/>
            <person name="Ishii K.J."/>
            <person name="Kawai T."/>
            <person name="Akira S."/>
            <person name="Suzuki K."/>
            <person name="Okuda K."/>
        </authorList>
    </citation>
    <scope>FUNCTION IN VIRAL INFECTION</scope>
</reference>
<reference key="8">
    <citation type="journal article" date="2008" name="EMBO Rep.">
        <title>The Atg8 and Atg12 ubiquitin-like conjugation systems in macroautophagy. 'Protein modifications: beyond the usual suspects' review series.</title>
        <authorList>
            <person name="Geng J."/>
            <person name="Klionsky D.J."/>
        </authorList>
    </citation>
    <scope>DOMAIN</scope>
</reference>
<reference key="9">
    <citation type="journal article" date="2008" name="Mol. Biol. Cell">
        <title>The Atg8 conjugation system is indispensable for proper development of autophagic isolation membranes in mice.</title>
        <authorList>
            <person name="Sou Y.S."/>
            <person name="Waguri S."/>
            <person name="Iwata J."/>
            <person name="Ueno T."/>
            <person name="Fujimura T."/>
            <person name="Hara T."/>
            <person name="Sawada N."/>
            <person name="Yamada A."/>
            <person name="Mizushima N."/>
            <person name="Uchiyama Y."/>
            <person name="Kominami E."/>
            <person name="Tanaka K."/>
            <person name="Komatsu M."/>
        </authorList>
    </citation>
    <scope>CONJUGATION TO ATG5</scope>
</reference>
<reference key="10">
    <citation type="journal article" date="2009" name="Blood">
        <title>Mitochondrial clearance is regulated by Atg7-dependent and -independent mechanisms during reticulocyte maturation.</title>
        <authorList>
            <person name="Zhang J."/>
            <person name="Randall M.S."/>
            <person name="Loyd M.R."/>
            <person name="Dorsey F.C."/>
            <person name="Kundu M."/>
            <person name="Cleveland J.L."/>
            <person name="Ney P.A."/>
        </authorList>
    </citation>
    <scope>CONJUGATION TO ATG5</scope>
</reference>
<reference key="11">
    <citation type="journal article" date="2010" name="Cell">
        <title>ATG12 conjugation to ATG3 regulates mitochondrial homeostasis and cell death.</title>
        <authorList>
            <person name="Radoshevich L."/>
            <person name="Murrow L."/>
            <person name="Chen N."/>
            <person name="Fernandez E."/>
            <person name="Roy S."/>
            <person name="Fung C."/>
            <person name="Debnath J."/>
        </authorList>
    </citation>
    <scope>FUNCTION</scope>
</reference>
<reference key="12">
    <citation type="journal article" date="2011" name="Autophagy">
        <title>Atg16L2, a novel isoform of mammalian Atg16L that is not essential for canonical autophagy despite forming an Atg12-5-16L2 complex.</title>
        <authorList>
            <person name="Ishibashi K."/>
            <person name="Fujita N."/>
            <person name="Kanno E."/>
            <person name="Omori H."/>
            <person name="Yoshimori T."/>
            <person name="Itoh T."/>
            <person name="Fukuda M."/>
        </authorList>
    </citation>
    <scope>IDENTIFICATION IN A COMPLEX WITH ATG5 AND ATG16L2</scope>
</reference>
<reference key="13">
    <citation type="journal article" date="2015" name="Nat. Cell Biol.">
        <title>ATG12-ATG3 interacts with Alix to promote basal autophagic flux and late endosome function.</title>
        <authorList>
            <person name="Murrow L."/>
            <person name="Malhotra R."/>
            <person name="Debnath J."/>
        </authorList>
    </citation>
    <scope>INTERACTION WITH PDCD6IP</scope>
</reference>
<reference key="14">
    <citation type="journal article" date="2024" name="J. Cell Biol.">
        <title>The V-ATPase-ATG16L1 axis recruits LRRK2 to facilitate the lysosomal stress response.</title>
        <authorList>
            <person name="Eguchi T."/>
            <person name="Sakurai M."/>
            <person name="Wang Y."/>
            <person name="Saito C."/>
            <person name="Yoshii G."/>
            <person name="Wileman T."/>
            <person name="Mizushima N."/>
            <person name="Kuwahara T."/>
            <person name="Iwatsubo T."/>
        </authorList>
    </citation>
    <scope>FUNCTION</scope>
</reference>